<keyword id="KW-0963">Cytoplasm</keyword>
<keyword id="KW-0620">Polyamine biosynthesis</keyword>
<keyword id="KW-1185">Reference proteome</keyword>
<keyword id="KW-0745">Spermidine biosynthesis</keyword>
<keyword id="KW-0808">Transferase</keyword>
<reference key="1">
    <citation type="journal article" date="2004" name="Proc. Natl. Acad. Sci. U.S.A.">
        <title>Genome sequence of the enterobacterial phytopathogen Erwinia carotovora subsp. atroseptica and characterization of virulence factors.</title>
        <authorList>
            <person name="Bell K.S."/>
            <person name="Sebaihia M."/>
            <person name="Pritchard L."/>
            <person name="Holden M.T.G."/>
            <person name="Hyman L.J."/>
            <person name="Holeva M.C."/>
            <person name="Thomson N.R."/>
            <person name="Bentley S.D."/>
            <person name="Churcher L.J.C."/>
            <person name="Mungall K."/>
            <person name="Atkin R."/>
            <person name="Bason N."/>
            <person name="Brooks K."/>
            <person name="Chillingworth T."/>
            <person name="Clark K."/>
            <person name="Doggett J."/>
            <person name="Fraser A."/>
            <person name="Hance Z."/>
            <person name="Hauser H."/>
            <person name="Jagels K."/>
            <person name="Moule S."/>
            <person name="Norbertczak H."/>
            <person name="Ormond D."/>
            <person name="Price C."/>
            <person name="Quail M.A."/>
            <person name="Sanders M."/>
            <person name="Walker D."/>
            <person name="Whitehead S."/>
            <person name="Salmond G.P.C."/>
            <person name="Birch P.R.J."/>
            <person name="Parkhill J."/>
            <person name="Toth I.K."/>
        </authorList>
    </citation>
    <scope>NUCLEOTIDE SEQUENCE [LARGE SCALE GENOMIC DNA]</scope>
    <source>
        <strain>SCRI 1043 / ATCC BAA-672</strain>
    </source>
</reference>
<gene>
    <name evidence="1" type="primary">speE</name>
    <name type="ordered locus">ECA3333</name>
</gene>
<protein>
    <recommendedName>
        <fullName evidence="1">Polyamine aminopropyltransferase</fullName>
    </recommendedName>
    <alternativeName>
        <fullName evidence="1">Putrescine aminopropyltransferase</fullName>
        <shortName evidence="1">PAPT</shortName>
    </alternativeName>
    <alternativeName>
        <fullName evidence="1">Spermidine synthase</fullName>
        <shortName evidence="1">SPDS</shortName>
        <shortName evidence="1">SPDSY</shortName>
        <ecNumber evidence="1">2.5.1.16</ecNumber>
    </alternativeName>
</protein>
<organism>
    <name type="scientific">Pectobacterium atrosepticum (strain SCRI 1043 / ATCC BAA-672)</name>
    <name type="common">Erwinia carotovora subsp. atroseptica</name>
    <dbReference type="NCBI Taxonomy" id="218491"/>
    <lineage>
        <taxon>Bacteria</taxon>
        <taxon>Pseudomonadati</taxon>
        <taxon>Pseudomonadota</taxon>
        <taxon>Gammaproteobacteria</taxon>
        <taxon>Enterobacterales</taxon>
        <taxon>Pectobacteriaceae</taxon>
        <taxon>Pectobacterium</taxon>
    </lineage>
</organism>
<proteinExistence type="inferred from homology"/>
<sequence>MSQKEIWYETLHANFGQYFSVDRVLYHEKTDHQDLIIFENDALGRVMALDGVVQTTERDEFIYHEMLTHVPLLSHGNAKRVLIIGGGDGGMLREVSRHHGVEQITMVEIDAGVVEFCRQYLPNHSAGSYDDPRFNLVIDDGVNFVRQCSEKFDVIISDCTDPIGPGESLFTSDFYQGCARSLNEGGIFVAQNGVCFLQQDEAIGSHKKLSHYFNDVSFYQAAIPTYYGGIMTFAWASNNPALRQMDIVTLRQHFAQSGITCRYYTPDVHIGSFALPQYLLSALQNAQ</sequence>
<dbReference type="EC" id="2.5.1.16" evidence="1"/>
<dbReference type="EMBL" id="BX950851">
    <property type="protein sequence ID" value="CAG76231.1"/>
    <property type="molecule type" value="Genomic_DNA"/>
</dbReference>
<dbReference type="RefSeq" id="WP_011094846.1">
    <property type="nucleotide sequence ID" value="NC_004547.2"/>
</dbReference>
<dbReference type="SMR" id="Q6D1W4"/>
<dbReference type="STRING" id="218491.ECA3333"/>
<dbReference type="GeneID" id="57210022"/>
<dbReference type="KEGG" id="eca:ECA3333"/>
<dbReference type="PATRIC" id="fig|218491.5.peg.3384"/>
<dbReference type="eggNOG" id="COG0421">
    <property type="taxonomic scope" value="Bacteria"/>
</dbReference>
<dbReference type="HOGENOM" id="CLU_048199_1_0_6"/>
<dbReference type="OrthoDB" id="9793120at2"/>
<dbReference type="UniPathway" id="UPA00248">
    <property type="reaction ID" value="UER00314"/>
</dbReference>
<dbReference type="Proteomes" id="UP000007966">
    <property type="component" value="Chromosome"/>
</dbReference>
<dbReference type="GO" id="GO:0005829">
    <property type="term" value="C:cytosol"/>
    <property type="evidence" value="ECO:0007669"/>
    <property type="project" value="TreeGrafter"/>
</dbReference>
<dbReference type="GO" id="GO:0004766">
    <property type="term" value="F:spermidine synthase activity"/>
    <property type="evidence" value="ECO:0007669"/>
    <property type="project" value="UniProtKB-UniRule"/>
</dbReference>
<dbReference type="GO" id="GO:0008295">
    <property type="term" value="P:spermidine biosynthetic process"/>
    <property type="evidence" value="ECO:0007669"/>
    <property type="project" value="UniProtKB-UniRule"/>
</dbReference>
<dbReference type="CDD" id="cd02440">
    <property type="entry name" value="AdoMet_MTases"/>
    <property type="match status" value="1"/>
</dbReference>
<dbReference type="FunFam" id="2.30.140.10:FF:000002">
    <property type="entry name" value="Polyamine aminopropyltransferase"/>
    <property type="match status" value="1"/>
</dbReference>
<dbReference type="FunFam" id="3.40.50.150:FF:000026">
    <property type="entry name" value="Polyamine aminopropyltransferase"/>
    <property type="match status" value="1"/>
</dbReference>
<dbReference type="Gene3D" id="2.30.140.10">
    <property type="entry name" value="Spermidine synthase, tetramerisation domain"/>
    <property type="match status" value="1"/>
</dbReference>
<dbReference type="Gene3D" id="3.40.50.150">
    <property type="entry name" value="Vaccinia Virus protein VP39"/>
    <property type="match status" value="1"/>
</dbReference>
<dbReference type="HAMAP" id="MF_00198">
    <property type="entry name" value="Spermidine_synth"/>
    <property type="match status" value="1"/>
</dbReference>
<dbReference type="InterPro" id="IPR030374">
    <property type="entry name" value="PABS"/>
</dbReference>
<dbReference type="InterPro" id="IPR030373">
    <property type="entry name" value="PABS_CS"/>
</dbReference>
<dbReference type="InterPro" id="IPR029063">
    <property type="entry name" value="SAM-dependent_MTases_sf"/>
</dbReference>
<dbReference type="InterPro" id="IPR001045">
    <property type="entry name" value="Spermi_synthase"/>
</dbReference>
<dbReference type="InterPro" id="IPR035246">
    <property type="entry name" value="Spermidine_synt_N"/>
</dbReference>
<dbReference type="InterPro" id="IPR037163">
    <property type="entry name" value="Spermidine_synt_N_sf"/>
</dbReference>
<dbReference type="NCBIfam" id="NF037959">
    <property type="entry name" value="MFS_SpdSyn"/>
    <property type="match status" value="1"/>
</dbReference>
<dbReference type="NCBIfam" id="NF002010">
    <property type="entry name" value="PRK00811.1"/>
    <property type="match status" value="1"/>
</dbReference>
<dbReference type="NCBIfam" id="TIGR00417">
    <property type="entry name" value="speE"/>
    <property type="match status" value="1"/>
</dbReference>
<dbReference type="PANTHER" id="PTHR11558:SF11">
    <property type="entry name" value="SPERMIDINE SYNTHASE"/>
    <property type="match status" value="1"/>
</dbReference>
<dbReference type="PANTHER" id="PTHR11558">
    <property type="entry name" value="SPERMIDINE/SPERMINE SYNTHASE"/>
    <property type="match status" value="1"/>
</dbReference>
<dbReference type="Pfam" id="PF17284">
    <property type="entry name" value="Spermine_synt_N"/>
    <property type="match status" value="1"/>
</dbReference>
<dbReference type="Pfam" id="PF01564">
    <property type="entry name" value="Spermine_synth"/>
    <property type="match status" value="1"/>
</dbReference>
<dbReference type="SUPFAM" id="SSF53335">
    <property type="entry name" value="S-adenosyl-L-methionine-dependent methyltransferases"/>
    <property type="match status" value="1"/>
</dbReference>
<dbReference type="PROSITE" id="PS01330">
    <property type="entry name" value="PABS_1"/>
    <property type="match status" value="1"/>
</dbReference>
<dbReference type="PROSITE" id="PS51006">
    <property type="entry name" value="PABS_2"/>
    <property type="match status" value="1"/>
</dbReference>
<evidence type="ECO:0000255" key="1">
    <source>
        <dbReference type="HAMAP-Rule" id="MF_00198"/>
    </source>
</evidence>
<comment type="function">
    <text evidence="1">Catalyzes the irreversible transfer of a propylamine group from the amino donor S-adenosylmethioninamine (decarboxy-AdoMet) to putrescine (1,4-diaminobutane) to yield spermidine.</text>
</comment>
<comment type="catalytic activity">
    <reaction evidence="1">
        <text>S-adenosyl 3-(methylsulfanyl)propylamine + putrescine = S-methyl-5'-thioadenosine + spermidine + H(+)</text>
        <dbReference type="Rhea" id="RHEA:12721"/>
        <dbReference type="ChEBI" id="CHEBI:15378"/>
        <dbReference type="ChEBI" id="CHEBI:17509"/>
        <dbReference type="ChEBI" id="CHEBI:57443"/>
        <dbReference type="ChEBI" id="CHEBI:57834"/>
        <dbReference type="ChEBI" id="CHEBI:326268"/>
        <dbReference type="EC" id="2.5.1.16"/>
    </reaction>
</comment>
<comment type="pathway">
    <text evidence="1">Amine and polyamine biosynthesis; spermidine biosynthesis; spermidine from putrescine: step 1/1.</text>
</comment>
<comment type="subunit">
    <text evidence="1">Homodimer or homotetramer.</text>
</comment>
<comment type="subcellular location">
    <subcellularLocation>
        <location evidence="1">Cytoplasm</location>
    </subcellularLocation>
</comment>
<comment type="similarity">
    <text evidence="1">Belongs to the spermidine/spermine synthase family.</text>
</comment>
<feature type="chain" id="PRO_1000012000" description="Polyamine aminopropyltransferase">
    <location>
        <begin position="1"/>
        <end position="287"/>
    </location>
</feature>
<feature type="domain" description="PABS" evidence="1">
    <location>
        <begin position="5"/>
        <end position="238"/>
    </location>
</feature>
<feature type="active site" description="Proton acceptor" evidence="1">
    <location>
        <position position="158"/>
    </location>
</feature>
<feature type="binding site" evidence="1">
    <location>
        <position position="33"/>
    </location>
    <ligand>
        <name>S-methyl-5'-thioadenosine</name>
        <dbReference type="ChEBI" id="CHEBI:17509"/>
    </ligand>
</feature>
<feature type="binding site" evidence="1">
    <location>
        <position position="64"/>
    </location>
    <ligand>
        <name>spermidine</name>
        <dbReference type="ChEBI" id="CHEBI:57834"/>
    </ligand>
</feature>
<feature type="binding site" evidence="1">
    <location>
        <position position="88"/>
    </location>
    <ligand>
        <name>spermidine</name>
        <dbReference type="ChEBI" id="CHEBI:57834"/>
    </ligand>
</feature>
<feature type="binding site" evidence="1">
    <location>
        <position position="108"/>
    </location>
    <ligand>
        <name>S-methyl-5'-thioadenosine</name>
        <dbReference type="ChEBI" id="CHEBI:17509"/>
    </ligand>
</feature>
<feature type="binding site" evidence="1">
    <location>
        <begin position="140"/>
        <end position="141"/>
    </location>
    <ligand>
        <name>S-methyl-5'-thioadenosine</name>
        <dbReference type="ChEBI" id="CHEBI:17509"/>
    </ligand>
</feature>
<feature type="binding site" evidence="1">
    <location>
        <begin position="158"/>
        <end position="161"/>
    </location>
    <ligand>
        <name>spermidine</name>
        <dbReference type="ChEBI" id="CHEBI:57834"/>
    </ligand>
</feature>
<feature type="binding site" evidence="1">
    <location>
        <position position="165"/>
    </location>
    <ligand>
        <name>S-methyl-5'-thioadenosine</name>
        <dbReference type="ChEBI" id="CHEBI:17509"/>
    </ligand>
</feature>
<accession>Q6D1W4</accession>
<name>SPEE_PECAS</name>